<comment type="function">
    <text evidence="1">Mitochondrial membrane ATP synthase (F(1)F(0) ATP synthase or Complex V) produces ATP from ADP in the presence of a proton gradient across the membrane which is generated by electron transport complexes of the respiratory chain. F-type ATPases consist of two structural domains, F(1) - containing the extramembraneous catalytic core and F(0) - containing the membrane proton channel, linked together by a central stalk and a peripheral stalk. During catalysis, ATP synthesis in the catalytic domain of F(1) is coupled via a rotary mechanism of the central stalk subunits to proton translocation. Part of the complex F(0) domain. Minor subunit located with subunit a in the membrane (By similarity).</text>
</comment>
<comment type="subunit">
    <text evidence="1">F-type ATPases have 2 components, CF(1) - the catalytic core - and CF(0) - the membrane proton channel.</text>
</comment>
<comment type="subcellular location">
    <subcellularLocation>
        <location>Mitochondrion membrane</location>
        <topology>Single-pass membrane protein</topology>
    </subcellularLocation>
</comment>
<comment type="similarity">
    <text evidence="3">Belongs to the ATPase protein 8 family.</text>
</comment>
<sequence length="53" mass="6338">MPQMAPISWLLLFIVFSITFILFCSINYYSYMPTSPKSNELKNINLNSMNWKW</sequence>
<organism>
    <name type="scientific">Drosophila yakuba</name>
    <name type="common">Fruit fly</name>
    <dbReference type="NCBI Taxonomy" id="7245"/>
    <lineage>
        <taxon>Eukaryota</taxon>
        <taxon>Metazoa</taxon>
        <taxon>Ecdysozoa</taxon>
        <taxon>Arthropoda</taxon>
        <taxon>Hexapoda</taxon>
        <taxon>Insecta</taxon>
        <taxon>Pterygota</taxon>
        <taxon>Neoptera</taxon>
        <taxon>Endopterygota</taxon>
        <taxon>Diptera</taxon>
        <taxon>Brachycera</taxon>
        <taxon>Muscomorpha</taxon>
        <taxon>Ephydroidea</taxon>
        <taxon>Drosophilidae</taxon>
        <taxon>Drosophila</taxon>
        <taxon>Sophophora</taxon>
    </lineage>
</organism>
<feature type="chain" id="PRO_0000195526" description="ATP synthase protein 8">
    <location>
        <begin position="1"/>
        <end position="53"/>
    </location>
</feature>
<feature type="transmembrane region" description="Helical" evidence="2">
    <location>
        <begin position="4"/>
        <end position="24"/>
    </location>
</feature>
<keyword id="KW-0066">ATP synthesis</keyword>
<keyword id="KW-0138">CF(0)</keyword>
<keyword id="KW-0375">Hydrogen ion transport</keyword>
<keyword id="KW-0406">Ion transport</keyword>
<keyword id="KW-0472">Membrane</keyword>
<keyword id="KW-0496">Mitochondrion</keyword>
<keyword id="KW-0812">Transmembrane</keyword>
<keyword id="KW-1133">Transmembrane helix</keyword>
<keyword id="KW-0813">Transport</keyword>
<accession>P03933</accession>
<evidence type="ECO:0000250" key="1"/>
<evidence type="ECO:0000255" key="2"/>
<evidence type="ECO:0000305" key="3"/>
<protein>
    <recommendedName>
        <fullName>ATP synthase protein 8</fullName>
    </recommendedName>
    <alternativeName>
        <fullName>A6L</fullName>
    </alternativeName>
    <alternativeName>
        <fullName>F-ATPase subunit 8</fullName>
    </alternativeName>
</protein>
<name>ATP8_DROYA</name>
<dbReference type="EMBL" id="X00924">
    <property type="protein sequence ID" value="CAA25441.1"/>
    <property type="molecule type" value="Genomic_DNA"/>
</dbReference>
<dbReference type="EMBL" id="X03240">
    <property type="protein sequence ID" value="CAA26988.1"/>
    <property type="molecule type" value="Genomic_DNA"/>
</dbReference>
<dbReference type="PIR" id="D93477">
    <property type="entry name" value="PWFF8Y"/>
</dbReference>
<dbReference type="RefSeq" id="NP_006905.1">
    <property type="nucleotide sequence ID" value="NC_001322.1"/>
</dbReference>
<dbReference type="SMR" id="P03933"/>
<dbReference type="EnsemblMetazoa" id="GeneID_807633_df_mr">
    <property type="protein sequence ID" value="NP_006905.1"/>
    <property type="gene ID" value="GeneID_807633"/>
</dbReference>
<dbReference type="GeneID" id="807633"/>
<dbReference type="KEGG" id="dya:ATP8"/>
<dbReference type="CTD" id="4509"/>
<dbReference type="OrthoDB" id="7721627at2759"/>
<dbReference type="Proteomes" id="UP000002282">
    <property type="component" value="Mitochondrion"/>
</dbReference>
<dbReference type="GO" id="GO:0031966">
    <property type="term" value="C:mitochondrial membrane"/>
    <property type="evidence" value="ECO:0007669"/>
    <property type="project" value="UniProtKB-SubCell"/>
</dbReference>
<dbReference type="GO" id="GO:0045259">
    <property type="term" value="C:proton-transporting ATP synthase complex"/>
    <property type="evidence" value="ECO:0007669"/>
    <property type="project" value="UniProtKB-KW"/>
</dbReference>
<dbReference type="GO" id="GO:0015078">
    <property type="term" value="F:proton transmembrane transporter activity"/>
    <property type="evidence" value="ECO:0007669"/>
    <property type="project" value="InterPro"/>
</dbReference>
<dbReference type="GO" id="GO:0015986">
    <property type="term" value="P:proton motive force-driven ATP synthesis"/>
    <property type="evidence" value="ECO:0007669"/>
    <property type="project" value="InterPro"/>
</dbReference>
<dbReference type="InterPro" id="IPR001421">
    <property type="entry name" value="ATP8_metazoa"/>
</dbReference>
<dbReference type="Pfam" id="PF00895">
    <property type="entry name" value="ATP-synt_8"/>
    <property type="match status" value="1"/>
</dbReference>
<reference key="1">
    <citation type="journal article" date="1983" name="Nucleic Acids Res.">
        <title>Nucleotide sequence of a segment of Drosophila mitochondrial DNA that contains the genes for cytochrome c oxidase subunits II and III and ATPase subunit 6.</title>
        <authorList>
            <person name="Clary D.O."/>
            <person name="Wolstenholme D.R."/>
        </authorList>
    </citation>
    <scope>NUCLEOTIDE SEQUENCE [GENOMIC DNA]</scope>
</reference>
<reference key="2">
    <citation type="journal article" date="1985" name="J. Mol. Evol.">
        <title>The mitochondrial DNA molecular of Drosophila yakuba: nucleotide sequence, gene organization, and genetic code.</title>
        <authorList>
            <person name="Clary D.O."/>
            <person name="Wolstenholme D.R."/>
        </authorList>
    </citation>
    <scope>NUCLEOTIDE SEQUENCE [LARGE SCALE GENOMIC DNA]</scope>
    <source>
        <strain>2317.6 Ivory Coast</strain>
    </source>
</reference>
<proteinExistence type="inferred from homology"/>
<gene>
    <name type="primary">mt:ATPase8</name>
    <name type="synonym">ATP8</name>
    <name type="synonym">ATPase8</name>
    <name type="synonym">Mtatp8</name>
</gene>
<geneLocation type="mitochondrion"/>